<dbReference type="EMBL" id="AE002098">
    <property type="protein sequence ID" value="AAF42302.1"/>
    <property type="molecule type" value="Genomic_DNA"/>
</dbReference>
<dbReference type="PIR" id="G81019">
    <property type="entry name" value="G81019"/>
</dbReference>
<dbReference type="RefSeq" id="NP_274967.1">
    <property type="nucleotide sequence ID" value="NC_003112.2"/>
</dbReference>
<dbReference type="RefSeq" id="WP_002235240.1">
    <property type="nucleotide sequence ID" value="NC_003112.2"/>
</dbReference>
<dbReference type="SMR" id="Q9JXM4"/>
<dbReference type="FunCoup" id="Q9JXM4">
    <property type="interactions" value="514"/>
</dbReference>
<dbReference type="STRING" id="122586.NMB1973"/>
<dbReference type="PaxDb" id="122586-NMB1973"/>
<dbReference type="KEGG" id="nme:NMB1973"/>
<dbReference type="PATRIC" id="fig|122586.8.peg.2515"/>
<dbReference type="HOGENOM" id="CLU_132825_2_0_4"/>
<dbReference type="InParanoid" id="Q9JXM4"/>
<dbReference type="OrthoDB" id="9806791at2"/>
<dbReference type="Proteomes" id="UP000000425">
    <property type="component" value="Chromosome"/>
</dbReference>
<dbReference type="GO" id="GO:0005737">
    <property type="term" value="C:cytoplasm"/>
    <property type="evidence" value="ECO:0007669"/>
    <property type="project" value="UniProtKB-SubCell"/>
</dbReference>
<dbReference type="GO" id="GO:0005524">
    <property type="term" value="F:ATP binding"/>
    <property type="evidence" value="ECO:0007669"/>
    <property type="project" value="InterPro"/>
</dbReference>
<dbReference type="GO" id="GO:0046872">
    <property type="term" value="F:metal ion binding"/>
    <property type="evidence" value="ECO:0000318"/>
    <property type="project" value="GO_Central"/>
</dbReference>
<dbReference type="GO" id="GO:0044183">
    <property type="term" value="F:protein folding chaperone"/>
    <property type="evidence" value="ECO:0007669"/>
    <property type="project" value="InterPro"/>
</dbReference>
<dbReference type="GO" id="GO:0051087">
    <property type="term" value="F:protein-folding chaperone binding"/>
    <property type="evidence" value="ECO:0000318"/>
    <property type="project" value="GO_Central"/>
</dbReference>
<dbReference type="GO" id="GO:0051082">
    <property type="term" value="F:unfolded protein binding"/>
    <property type="evidence" value="ECO:0000318"/>
    <property type="project" value="GO_Central"/>
</dbReference>
<dbReference type="GO" id="GO:0051085">
    <property type="term" value="P:chaperone cofactor-dependent protein refolding"/>
    <property type="evidence" value="ECO:0000318"/>
    <property type="project" value="GO_Central"/>
</dbReference>
<dbReference type="CDD" id="cd00320">
    <property type="entry name" value="cpn10"/>
    <property type="match status" value="1"/>
</dbReference>
<dbReference type="FunFam" id="2.30.33.40:FF:000001">
    <property type="entry name" value="10 kDa chaperonin"/>
    <property type="match status" value="1"/>
</dbReference>
<dbReference type="Gene3D" id="2.30.33.40">
    <property type="entry name" value="GroES chaperonin"/>
    <property type="match status" value="1"/>
</dbReference>
<dbReference type="HAMAP" id="MF_00580">
    <property type="entry name" value="CH10"/>
    <property type="match status" value="1"/>
</dbReference>
<dbReference type="InterPro" id="IPR020818">
    <property type="entry name" value="Chaperonin_GroES"/>
</dbReference>
<dbReference type="InterPro" id="IPR037124">
    <property type="entry name" value="Chaperonin_GroES_sf"/>
</dbReference>
<dbReference type="InterPro" id="IPR018369">
    <property type="entry name" value="Chaprnonin_Cpn10_CS"/>
</dbReference>
<dbReference type="InterPro" id="IPR011032">
    <property type="entry name" value="GroES-like_sf"/>
</dbReference>
<dbReference type="NCBIfam" id="NF001527">
    <property type="entry name" value="PRK00364.1-2"/>
    <property type="match status" value="1"/>
</dbReference>
<dbReference type="NCBIfam" id="NF001531">
    <property type="entry name" value="PRK00364.2-2"/>
    <property type="match status" value="1"/>
</dbReference>
<dbReference type="NCBIfam" id="NF001533">
    <property type="entry name" value="PRK00364.2-4"/>
    <property type="match status" value="1"/>
</dbReference>
<dbReference type="NCBIfam" id="NF001534">
    <property type="entry name" value="PRK00364.2-5"/>
    <property type="match status" value="1"/>
</dbReference>
<dbReference type="PANTHER" id="PTHR10772">
    <property type="entry name" value="10 KDA HEAT SHOCK PROTEIN"/>
    <property type="match status" value="1"/>
</dbReference>
<dbReference type="PANTHER" id="PTHR10772:SF58">
    <property type="entry name" value="CO-CHAPERONIN GROES"/>
    <property type="match status" value="1"/>
</dbReference>
<dbReference type="Pfam" id="PF00166">
    <property type="entry name" value="Cpn10"/>
    <property type="match status" value="1"/>
</dbReference>
<dbReference type="PRINTS" id="PR00297">
    <property type="entry name" value="CHAPERONIN10"/>
</dbReference>
<dbReference type="SMART" id="SM00883">
    <property type="entry name" value="Cpn10"/>
    <property type="match status" value="1"/>
</dbReference>
<dbReference type="SUPFAM" id="SSF50129">
    <property type="entry name" value="GroES-like"/>
    <property type="match status" value="1"/>
</dbReference>
<dbReference type="PROSITE" id="PS00681">
    <property type="entry name" value="CHAPERONINS_CPN10"/>
    <property type="match status" value="1"/>
</dbReference>
<accession>Q9JXM4</accession>
<keyword id="KW-0143">Chaperone</keyword>
<keyword id="KW-0963">Cytoplasm</keyword>
<keyword id="KW-1185">Reference proteome</keyword>
<comment type="function">
    <text evidence="1">Together with the chaperonin GroEL, plays an essential role in assisting protein folding. The GroEL-GroES system forms a nano-cage that allows encapsulation of the non-native substrate proteins and provides a physical environment optimized to promote and accelerate protein folding. GroES binds to the apical surface of the GroEL ring, thereby capping the opening of the GroEL channel.</text>
</comment>
<comment type="subunit">
    <text evidence="1">Heptamer of 7 subunits arranged in a ring. Interacts with the chaperonin GroEL.</text>
</comment>
<comment type="subcellular location">
    <subcellularLocation>
        <location evidence="1">Cytoplasm</location>
    </subcellularLocation>
</comment>
<comment type="similarity">
    <text evidence="1">Belongs to the GroES chaperonin family.</text>
</comment>
<evidence type="ECO:0000255" key="1">
    <source>
        <dbReference type="HAMAP-Rule" id="MF_00580"/>
    </source>
</evidence>
<proteinExistence type="inferred from homology"/>
<name>CH10_NEIMB</name>
<sequence>MTIRPLHDRVVVKRLEAEEKTASGIVLPGAAAEKPDMGEVIAVGAGKIGKDGSRRPLDVKVGDKIIFGKYSGQTVKADGEELLVMREEDIFGIVEK</sequence>
<feature type="chain" id="PRO_0000174793" description="Co-chaperonin GroES">
    <location>
        <begin position="1"/>
        <end position="96"/>
    </location>
</feature>
<organism>
    <name type="scientific">Neisseria meningitidis serogroup B (strain ATCC BAA-335 / MC58)</name>
    <dbReference type="NCBI Taxonomy" id="122586"/>
    <lineage>
        <taxon>Bacteria</taxon>
        <taxon>Pseudomonadati</taxon>
        <taxon>Pseudomonadota</taxon>
        <taxon>Betaproteobacteria</taxon>
        <taxon>Neisseriales</taxon>
        <taxon>Neisseriaceae</taxon>
        <taxon>Neisseria</taxon>
    </lineage>
</organism>
<protein>
    <recommendedName>
        <fullName evidence="1">Co-chaperonin GroES</fullName>
    </recommendedName>
    <alternativeName>
        <fullName evidence="1">10 kDa chaperonin</fullName>
    </alternativeName>
    <alternativeName>
        <fullName evidence="1">Chaperonin-10</fullName>
        <shortName evidence="1">Cpn10</shortName>
    </alternativeName>
</protein>
<reference key="1">
    <citation type="journal article" date="2000" name="Science">
        <title>Complete genome sequence of Neisseria meningitidis serogroup B strain MC58.</title>
        <authorList>
            <person name="Tettelin H."/>
            <person name="Saunders N.J."/>
            <person name="Heidelberg J.F."/>
            <person name="Jeffries A.C."/>
            <person name="Nelson K.E."/>
            <person name="Eisen J.A."/>
            <person name="Ketchum K.A."/>
            <person name="Hood D.W."/>
            <person name="Peden J.F."/>
            <person name="Dodson R.J."/>
            <person name="Nelson W.C."/>
            <person name="Gwinn M.L."/>
            <person name="DeBoy R.T."/>
            <person name="Peterson J.D."/>
            <person name="Hickey E.K."/>
            <person name="Haft D.H."/>
            <person name="Salzberg S.L."/>
            <person name="White O."/>
            <person name="Fleischmann R.D."/>
            <person name="Dougherty B.A."/>
            <person name="Mason T.M."/>
            <person name="Ciecko A."/>
            <person name="Parksey D.S."/>
            <person name="Blair E."/>
            <person name="Cittone H."/>
            <person name="Clark E.B."/>
            <person name="Cotton M.D."/>
            <person name="Utterback T.R."/>
            <person name="Khouri H.M."/>
            <person name="Qin H."/>
            <person name="Vamathevan J.J."/>
            <person name="Gill J."/>
            <person name="Scarlato V."/>
            <person name="Masignani V."/>
            <person name="Pizza M."/>
            <person name="Grandi G."/>
            <person name="Sun L."/>
            <person name="Smith H.O."/>
            <person name="Fraser C.M."/>
            <person name="Moxon E.R."/>
            <person name="Rappuoli R."/>
            <person name="Venter J.C."/>
        </authorList>
    </citation>
    <scope>NUCLEOTIDE SEQUENCE [LARGE SCALE GENOMIC DNA]</scope>
    <source>
        <strain>ATCC BAA-335 / MC58</strain>
    </source>
</reference>
<gene>
    <name evidence="1" type="primary">groES</name>
    <name evidence="1" type="synonym">groS</name>
    <name type="ordered locus">NMB1973</name>
</gene>